<protein>
    <recommendedName>
        <fullName>C-X-C chemokine receptor type 3</fullName>
        <shortName>CXC-R3</shortName>
        <shortName>CXCR-3</shortName>
    </recommendedName>
    <alternativeName>
        <fullName>Interferon-inducible protein 10 receptor</fullName>
        <shortName>IP-10 receptor</shortName>
    </alternativeName>
    <cdAntigenName>CD183</cdAntigenName>
</protein>
<name>CXCR3_CANLF</name>
<comment type="function">
    <text evidence="2 3">Receptor for the C-X-C chemokine CXCL9, CXCL10 and CXCL11 and mediates the proliferation, survival and angiogenic activity of mesangial cells through a heterotrimeric G-protein signaling pathway. Probably promotes cell chemotaxis response (By similarity). Binds to CCL21. Upon activation by PF4, induces activated T-lymphocytes migration mediated via downstream Ras/extracellular signal-regulated kinase (ERK) signaling (By similarity).</text>
</comment>
<comment type="subunit">
    <text evidence="3">Homomer. Forms heteromers with ACKR4 (By similarity). Interacts with PF4/CXCL4 (By similarity).</text>
</comment>
<comment type="subcellular location">
    <subcellularLocation>
        <location evidence="1">Cell membrane</location>
        <topology evidence="1">Multi-pass membrane protein</topology>
    </subcellularLocation>
</comment>
<comment type="PTM">
    <text evidence="1">Sulfation on Tyr-27 and Tyr-29 is essential for CXCL10 binding.</text>
</comment>
<comment type="PTM">
    <text evidence="1">N-glycosylated.</text>
</comment>
<comment type="similarity">
    <text evidence="5">Belongs to the G-protein coupled receptor 1 family.</text>
</comment>
<reference key="1">
    <citation type="submission" date="2004-07" db="EMBL/GenBank/DDBJ databases">
        <title>Expression analysis of CXCR3 gene in canine atopic dermatitis.</title>
        <authorList>
            <person name="Tsukui T."/>
            <person name="Maeda S."/>
            <person name="Koyanagi M."/>
            <person name="Hashimoto R."/>
            <person name="Masuda K."/>
            <person name="Ohno K."/>
            <person name="Sakaguchi M."/>
            <person name="Tsujimoto H."/>
            <person name="Iwabuchi S."/>
        </authorList>
    </citation>
    <scope>NUCLEOTIDE SEQUENCE [MRNA]</scope>
</reference>
<evidence type="ECO:0000250" key="1"/>
<evidence type="ECO:0000250" key="2">
    <source>
        <dbReference type="UniProtKB" id="O88410"/>
    </source>
</evidence>
<evidence type="ECO:0000250" key="3">
    <source>
        <dbReference type="UniProtKB" id="P49682"/>
    </source>
</evidence>
<evidence type="ECO:0000255" key="4"/>
<evidence type="ECO:0000255" key="5">
    <source>
        <dbReference type="PROSITE-ProRule" id="PRU00521"/>
    </source>
</evidence>
<evidence type="ECO:0000256" key="6">
    <source>
        <dbReference type="SAM" id="MobiDB-lite"/>
    </source>
</evidence>
<feature type="chain" id="PRO_0000069344" description="C-X-C chemokine receptor type 3">
    <location>
        <begin position="1"/>
        <end position="365"/>
    </location>
</feature>
<feature type="topological domain" description="Extracellular" evidence="4">
    <location>
        <begin position="1"/>
        <end position="57"/>
    </location>
</feature>
<feature type="transmembrane region" description="Helical; Name=1" evidence="4">
    <location>
        <begin position="58"/>
        <end position="78"/>
    </location>
</feature>
<feature type="topological domain" description="Cytoplasmic" evidence="4">
    <location>
        <begin position="79"/>
        <end position="88"/>
    </location>
</feature>
<feature type="transmembrane region" description="Helical; Name=2" evidence="4">
    <location>
        <begin position="89"/>
        <end position="109"/>
    </location>
</feature>
<feature type="topological domain" description="Extracellular" evidence="4">
    <location>
        <begin position="110"/>
        <end position="126"/>
    </location>
</feature>
<feature type="transmembrane region" description="Helical; Name=3" evidence="4">
    <location>
        <begin position="127"/>
        <end position="147"/>
    </location>
</feature>
<feature type="topological domain" description="Cytoplasmic" evidence="4">
    <location>
        <begin position="148"/>
        <end position="169"/>
    </location>
</feature>
<feature type="transmembrane region" description="Helical; Name=4" evidence="4">
    <location>
        <begin position="170"/>
        <end position="190"/>
    </location>
</feature>
<feature type="topological domain" description="Extracellular" evidence="4">
    <location>
        <begin position="191"/>
        <end position="223"/>
    </location>
</feature>
<feature type="transmembrane region" description="Helical; Name=5" evidence="4">
    <location>
        <begin position="224"/>
        <end position="244"/>
    </location>
</feature>
<feature type="topological domain" description="Cytoplasmic" evidence="4">
    <location>
        <begin position="245"/>
        <end position="256"/>
    </location>
</feature>
<feature type="transmembrane region" description="Helical; Name=6" evidence="4">
    <location>
        <begin position="257"/>
        <end position="277"/>
    </location>
</feature>
<feature type="topological domain" description="Extracellular" evidence="4">
    <location>
        <begin position="278"/>
        <end position="301"/>
    </location>
</feature>
<feature type="transmembrane region" description="Helical; Name=7" evidence="4">
    <location>
        <begin position="302"/>
        <end position="322"/>
    </location>
</feature>
<feature type="topological domain" description="Cytoplasmic" evidence="4">
    <location>
        <begin position="323"/>
        <end position="365"/>
    </location>
</feature>
<feature type="region of interest" description="Disordered" evidence="6">
    <location>
        <begin position="342"/>
        <end position="365"/>
    </location>
</feature>
<feature type="modified residue" description="Sulfotyrosine" evidence="1">
    <location>
        <position position="27"/>
    </location>
</feature>
<feature type="modified residue" description="Sulfotyrosine" evidence="1">
    <location>
        <position position="29"/>
    </location>
</feature>
<feature type="glycosylation site" description="N-linked (GlcNAc...) asparagine" evidence="4">
    <location>
        <position position="22"/>
    </location>
</feature>
<feature type="glycosylation site" description="N-linked (GlcNAc...) asparagine" evidence="4">
    <location>
        <position position="32"/>
    </location>
</feature>
<feature type="disulfide bond" evidence="5">
    <location>
        <begin position="124"/>
        <end position="203"/>
    </location>
</feature>
<gene>
    <name type="primary">CXCR3</name>
</gene>
<sequence>MVPEMSERQVFQASELTYLLENCSSSYDYAENESDSCCASPPCPQDISLNFDRAFLPALYGLLFLLGLLGNGAVAAVLCSQRAARTSTDTFLLHLAVADMLLVLTLPLWRVDTAVQWVFGSGLCKVAGALFNINFYAGALLLACISFDRYLSIVHATQPYRRGPPARVTLTCVVVWGLCLFFAIPDFIFLSANRDERLNAMHCRYNFPQVGRTALRGLQLVAGFLLPLLVMAYCYARILAVLLVSRGQRRQRRMRLVVVVVVAFALCWTPYHLVVLVDTLMDLGALDRNCGRESRVDVAKSVTSGLGYMHCCLNPLLYAFVGVKFRERMWMLLLRLGCPDHRGHQRHPTLSRRESSWSETPSTPR</sequence>
<dbReference type="EMBL" id="AB185149">
    <property type="protein sequence ID" value="BAD86855.1"/>
    <property type="molecule type" value="mRNA"/>
</dbReference>
<dbReference type="SMR" id="Q5KSK8"/>
<dbReference type="FunCoup" id="Q5KSK8">
    <property type="interactions" value="182"/>
</dbReference>
<dbReference type="STRING" id="9615.ENSCAFP00000025254"/>
<dbReference type="BindingDB" id="Q5KSK8"/>
<dbReference type="ChEMBL" id="CHEMBL1075194"/>
<dbReference type="GlyCosmos" id="Q5KSK8">
    <property type="glycosylation" value="2 sites, No reported glycans"/>
</dbReference>
<dbReference type="PaxDb" id="9612-ENSCAFP00000025254"/>
<dbReference type="eggNOG" id="KOG3656">
    <property type="taxonomic scope" value="Eukaryota"/>
</dbReference>
<dbReference type="InParanoid" id="Q5KSK8"/>
<dbReference type="OrthoDB" id="9818824at2759"/>
<dbReference type="PRO" id="PR:Q5KSK8"/>
<dbReference type="Proteomes" id="UP000002254">
    <property type="component" value="Unplaced"/>
</dbReference>
<dbReference type="Proteomes" id="UP000694429">
    <property type="component" value="Unplaced"/>
</dbReference>
<dbReference type="Proteomes" id="UP000694542">
    <property type="component" value="Unplaced"/>
</dbReference>
<dbReference type="Proteomes" id="UP000805418">
    <property type="component" value="Unplaced"/>
</dbReference>
<dbReference type="GO" id="GO:0009897">
    <property type="term" value="C:external side of plasma membrane"/>
    <property type="evidence" value="ECO:0000318"/>
    <property type="project" value="GO_Central"/>
</dbReference>
<dbReference type="GO" id="GO:0005886">
    <property type="term" value="C:plasma membrane"/>
    <property type="evidence" value="ECO:0000250"/>
    <property type="project" value="UniProtKB"/>
</dbReference>
<dbReference type="GO" id="GO:0019957">
    <property type="term" value="F:C-C chemokine binding"/>
    <property type="evidence" value="ECO:0000318"/>
    <property type="project" value="GO_Central"/>
</dbReference>
<dbReference type="GO" id="GO:0016493">
    <property type="term" value="F:C-C chemokine receptor activity"/>
    <property type="evidence" value="ECO:0000318"/>
    <property type="project" value="GO_Central"/>
</dbReference>
<dbReference type="GO" id="GO:0019958">
    <property type="term" value="F:C-X-C chemokine binding"/>
    <property type="evidence" value="ECO:0000250"/>
    <property type="project" value="UniProtKB"/>
</dbReference>
<dbReference type="GO" id="GO:0016494">
    <property type="term" value="F:C-X-C chemokine receptor activity"/>
    <property type="evidence" value="ECO:0007669"/>
    <property type="project" value="InterPro"/>
</dbReference>
<dbReference type="GO" id="GO:0038023">
    <property type="term" value="F:signaling receptor activity"/>
    <property type="evidence" value="ECO:0000250"/>
    <property type="project" value="UniProtKB"/>
</dbReference>
<dbReference type="GO" id="GO:0001525">
    <property type="term" value="P:angiogenesis"/>
    <property type="evidence" value="ECO:0007669"/>
    <property type="project" value="UniProtKB-KW"/>
</dbReference>
<dbReference type="GO" id="GO:0019722">
    <property type="term" value="P:calcium-mediated signaling"/>
    <property type="evidence" value="ECO:0000318"/>
    <property type="project" value="GO_Central"/>
</dbReference>
<dbReference type="GO" id="GO:0060326">
    <property type="term" value="P:cell chemotaxis"/>
    <property type="evidence" value="ECO:0000318"/>
    <property type="project" value="GO_Central"/>
</dbReference>
<dbReference type="GO" id="GO:0007186">
    <property type="term" value="P:G protein-coupled receptor signaling pathway"/>
    <property type="evidence" value="ECO:0000250"/>
    <property type="project" value="UniProtKB"/>
</dbReference>
<dbReference type="GO" id="GO:0006955">
    <property type="term" value="P:immune response"/>
    <property type="evidence" value="ECO:0000318"/>
    <property type="project" value="GO_Central"/>
</dbReference>
<dbReference type="GO" id="GO:0006954">
    <property type="term" value="P:inflammatory response"/>
    <property type="evidence" value="ECO:0007669"/>
    <property type="project" value="InterPro"/>
</dbReference>
<dbReference type="GO" id="GO:1900118">
    <property type="term" value="P:negative regulation of execution phase of apoptosis"/>
    <property type="evidence" value="ECO:0000250"/>
    <property type="project" value="UniProtKB"/>
</dbReference>
<dbReference type="GO" id="GO:0045766">
    <property type="term" value="P:positive regulation of angiogenesis"/>
    <property type="evidence" value="ECO:0000250"/>
    <property type="project" value="UniProtKB"/>
</dbReference>
<dbReference type="GO" id="GO:0008284">
    <property type="term" value="P:positive regulation of cell population proliferation"/>
    <property type="evidence" value="ECO:0000250"/>
    <property type="project" value="UniProtKB"/>
</dbReference>
<dbReference type="GO" id="GO:0050921">
    <property type="term" value="P:positive regulation of chemotaxis"/>
    <property type="evidence" value="ECO:0000250"/>
    <property type="project" value="UniProtKB"/>
</dbReference>
<dbReference type="GO" id="GO:0007204">
    <property type="term" value="P:positive regulation of cytosolic calcium ion concentration"/>
    <property type="evidence" value="ECO:0000318"/>
    <property type="project" value="GO_Central"/>
</dbReference>
<dbReference type="GO" id="GO:0051281">
    <property type="term" value="P:positive regulation of release of sequestered calcium ion into cytosol"/>
    <property type="evidence" value="ECO:0000250"/>
    <property type="project" value="UniProtKB"/>
</dbReference>
<dbReference type="GO" id="GO:0002685">
    <property type="term" value="P:regulation of leukocyte migration"/>
    <property type="evidence" value="ECO:0007669"/>
    <property type="project" value="InterPro"/>
</dbReference>
<dbReference type="FunFam" id="1.20.1070.10:FF:000159">
    <property type="entry name" value="C-X-C chemokine receptor type 3"/>
    <property type="match status" value="1"/>
</dbReference>
<dbReference type="Gene3D" id="1.20.1070.10">
    <property type="entry name" value="Rhodopsin 7-helix transmembrane proteins"/>
    <property type="match status" value="1"/>
</dbReference>
<dbReference type="InterPro" id="IPR050119">
    <property type="entry name" value="CCR1-9-like"/>
</dbReference>
<dbReference type="InterPro" id="IPR004070">
    <property type="entry name" value="Chemokine_CXCR3"/>
</dbReference>
<dbReference type="InterPro" id="IPR000355">
    <property type="entry name" value="Chemokine_rcpt"/>
</dbReference>
<dbReference type="InterPro" id="IPR000276">
    <property type="entry name" value="GPCR_Rhodpsn"/>
</dbReference>
<dbReference type="InterPro" id="IPR017452">
    <property type="entry name" value="GPCR_Rhodpsn_7TM"/>
</dbReference>
<dbReference type="PANTHER" id="PTHR10489:SF671">
    <property type="entry name" value="C-X-C CHEMOKINE RECEPTOR TYPE 3"/>
    <property type="match status" value="1"/>
</dbReference>
<dbReference type="PANTHER" id="PTHR10489">
    <property type="entry name" value="CELL ADHESION MOLECULE"/>
    <property type="match status" value="1"/>
</dbReference>
<dbReference type="Pfam" id="PF00001">
    <property type="entry name" value="7tm_1"/>
    <property type="match status" value="1"/>
</dbReference>
<dbReference type="PRINTS" id="PR00657">
    <property type="entry name" value="CCCHEMOKINER"/>
</dbReference>
<dbReference type="PRINTS" id="PR01532">
    <property type="entry name" value="CXCCHMKINER3"/>
</dbReference>
<dbReference type="PRINTS" id="PR00237">
    <property type="entry name" value="GPCRRHODOPSN"/>
</dbReference>
<dbReference type="SUPFAM" id="SSF81321">
    <property type="entry name" value="Family A G protein-coupled receptor-like"/>
    <property type="match status" value="1"/>
</dbReference>
<dbReference type="PROSITE" id="PS00237">
    <property type="entry name" value="G_PROTEIN_RECEP_F1_1"/>
    <property type="match status" value="1"/>
</dbReference>
<dbReference type="PROSITE" id="PS50262">
    <property type="entry name" value="G_PROTEIN_RECEP_F1_2"/>
    <property type="match status" value="1"/>
</dbReference>
<proteinExistence type="evidence at transcript level"/>
<organism>
    <name type="scientific">Canis lupus familiaris</name>
    <name type="common">Dog</name>
    <name type="synonym">Canis familiaris</name>
    <dbReference type="NCBI Taxonomy" id="9615"/>
    <lineage>
        <taxon>Eukaryota</taxon>
        <taxon>Metazoa</taxon>
        <taxon>Chordata</taxon>
        <taxon>Craniata</taxon>
        <taxon>Vertebrata</taxon>
        <taxon>Euteleostomi</taxon>
        <taxon>Mammalia</taxon>
        <taxon>Eutheria</taxon>
        <taxon>Laurasiatheria</taxon>
        <taxon>Carnivora</taxon>
        <taxon>Caniformia</taxon>
        <taxon>Canidae</taxon>
        <taxon>Canis</taxon>
    </lineage>
</organism>
<keyword id="KW-0037">Angiogenesis</keyword>
<keyword id="KW-1003">Cell membrane</keyword>
<keyword id="KW-0145">Chemotaxis</keyword>
<keyword id="KW-1015">Disulfide bond</keyword>
<keyword id="KW-0297">G-protein coupled receptor</keyword>
<keyword id="KW-0325">Glycoprotein</keyword>
<keyword id="KW-0472">Membrane</keyword>
<keyword id="KW-0675">Receptor</keyword>
<keyword id="KW-1185">Reference proteome</keyword>
<keyword id="KW-0765">Sulfation</keyword>
<keyword id="KW-0807">Transducer</keyword>
<keyword id="KW-0812">Transmembrane</keyword>
<keyword id="KW-1133">Transmembrane helix</keyword>
<accession>Q5KSK8</accession>